<evidence type="ECO:0000269" key="1">
    <source ref="1"/>
</evidence>
<evidence type="ECO:0000305" key="2"/>
<reference evidence="2" key="1">
    <citation type="submission" date="2002-07" db="UniProtKB">
        <authorList>
            <person name="Bulet P."/>
            <person name="Lamberty M."/>
            <person name="Brookhart G."/>
            <person name="Bushey D."/>
        </authorList>
    </citation>
    <scope>PROTEIN SEQUENCE</scope>
    <scope>FUNCTION</scope>
    <scope>SUBUNIT</scope>
    <scope>SUBCELLULAR LOCATION</scope>
    <scope>TISSUE SPECIFICITY</scope>
    <scope>INDUCTION</scope>
    <scope>MASS SPECTROMETRY</scope>
    <scope>AMIDATION AT LEU-35</scope>
    <source>
        <tissue>Hemolymph</tissue>
    </source>
</reference>
<accession>P83413</accession>
<organism evidence="2">
    <name type="scientific">Heliothis virescens</name>
    <name type="common">Tobacco budworm moth</name>
    <dbReference type="NCBI Taxonomy" id="7102"/>
    <lineage>
        <taxon>Eukaryota</taxon>
        <taxon>Metazoa</taxon>
        <taxon>Ecdysozoa</taxon>
        <taxon>Arthropoda</taxon>
        <taxon>Hexapoda</taxon>
        <taxon>Insecta</taxon>
        <taxon>Pterygota</taxon>
        <taxon>Neoptera</taxon>
        <taxon>Endopterygota</taxon>
        <taxon>Lepidoptera</taxon>
        <taxon>Glossata</taxon>
        <taxon>Ditrysia</taxon>
        <taxon>Noctuoidea</taxon>
        <taxon>Noctuidae</taxon>
        <taxon>Heliothinae</taxon>
        <taxon>Heliothis</taxon>
    </lineage>
</organism>
<protein>
    <recommendedName>
        <fullName>Cecropin-A</fullName>
    </recommendedName>
</protein>
<keyword id="KW-0027">Amidation</keyword>
<keyword id="KW-0044">Antibiotic</keyword>
<keyword id="KW-0929">Antimicrobial</keyword>
<keyword id="KW-0903">Direct protein sequencing</keyword>
<keyword id="KW-0295">Fungicide</keyword>
<keyword id="KW-0391">Immunity</keyword>
<keyword id="KW-0399">Innate immunity</keyword>
<keyword id="KW-0964">Secreted</keyword>
<feature type="peptide" id="PRO_0000044681" description="Cecropin-A">
    <location>
        <begin position="1"/>
        <end position="35"/>
    </location>
</feature>
<feature type="modified residue" description="Leucine amide" evidence="1">
    <location>
        <position position="35"/>
    </location>
</feature>
<dbReference type="SMR" id="P83413"/>
<dbReference type="GO" id="GO:0005576">
    <property type="term" value="C:extracellular region"/>
    <property type="evidence" value="ECO:0007669"/>
    <property type="project" value="UniProtKB-SubCell"/>
</dbReference>
<dbReference type="GO" id="GO:0019731">
    <property type="term" value="P:antibacterial humoral response"/>
    <property type="evidence" value="ECO:0007669"/>
    <property type="project" value="InterPro"/>
</dbReference>
<dbReference type="GO" id="GO:0050832">
    <property type="term" value="P:defense response to fungus"/>
    <property type="evidence" value="ECO:0007669"/>
    <property type="project" value="UniProtKB-KW"/>
</dbReference>
<dbReference type="GO" id="GO:0050830">
    <property type="term" value="P:defense response to Gram-positive bacterium"/>
    <property type="evidence" value="ECO:0007669"/>
    <property type="project" value="UniProtKB-ARBA"/>
</dbReference>
<dbReference type="GO" id="GO:0045087">
    <property type="term" value="P:innate immune response"/>
    <property type="evidence" value="ECO:0007669"/>
    <property type="project" value="UniProtKB-KW"/>
</dbReference>
<dbReference type="GO" id="GO:0031640">
    <property type="term" value="P:killing of cells of another organism"/>
    <property type="evidence" value="ECO:0007669"/>
    <property type="project" value="UniProtKB-KW"/>
</dbReference>
<dbReference type="InterPro" id="IPR000875">
    <property type="entry name" value="Cecropin"/>
</dbReference>
<dbReference type="Pfam" id="PF00272">
    <property type="entry name" value="Cecropin"/>
    <property type="match status" value="1"/>
</dbReference>
<dbReference type="PROSITE" id="PS00268">
    <property type="entry name" value="CECROPIN"/>
    <property type="match status" value="1"/>
</dbReference>
<comment type="function">
    <text evidence="1">Cecropins have lytic and antibacterial activity against several Gram-positive and Gram-negative bacteria. Also has activity against fungi.</text>
</comment>
<comment type="subunit">
    <text evidence="1 2">Monomer.</text>
</comment>
<comment type="subcellular location">
    <subcellularLocation>
        <location evidence="1 2">Secreted</location>
    </subcellularLocation>
</comment>
<comment type="tissue specificity">
    <text evidence="1 2">Hemolymph.</text>
</comment>
<comment type="induction">
    <text evidence="1 2">By bacterial infection.</text>
</comment>
<comment type="mass spectrometry"/>
<comment type="similarity">
    <text evidence="2">Belongs to the cecropin family.</text>
</comment>
<sequence>RWKVFKKIEKVGRNIRDGVIKAAPAIEVLGQAKAL</sequence>
<proteinExistence type="evidence at protein level"/>
<name>CECA_HELVI</name>